<sequence length="300" mass="31436">MAADRTAAGTAVRRRQCRGGVRRQRTHVLSSATAGGPHPRNLIGMTVSIPTTPNTRLQGKRCLITAAGAGIGRESALACARAGAHVIATDIDAAALQALAAESDAITTQLLDVTDAAAITALVAAHGPFDVLFNCAGYVHQGSILDCDEPAWRRSFSINVDAMYYTCKAVLPGMLERGRGSIINMSSVASSIKGVPNRFVYGVTKAAVIGLSKAIAADYVAQGVRCNAICPGTIKTPSLGQRVQALGGDEQAVWKSFTDRQPMGRLGDPREIAQLVVYLASDESSFTTGQTHIIDGGWSN</sequence>
<organism>
    <name type="scientific">Xanthomonas campestris pv. campestris (strain ATCC 33913 / DSM 3586 / NCPPB 528 / LMG 568 / P 25)</name>
    <dbReference type="NCBI Taxonomy" id="190485"/>
    <lineage>
        <taxon>Bacteria</taxon>
        <taxon>Pseudomonadati</taxon>
        <taxon>Pseudomonadota</taxon>
        <taxon>Gammaproteobacteria</taxon>
        <taxon>Lysobacterales</taxon>
        <taxon>Lysobacteraceae</taxon>
        <taxon>Xanthomonas</taxon>
    </lineage>
</organism>
<name>FUCDH_XANCP</name>
<reference key="1">
    <citation type="journal article" date="2002" name="Nature">
        <title>Comparison of the genomes of two Xanthomonas pathogens with differing host specificities.</title>
        <authorList>
            <person name="da Silva A.C.R."/>
            <person name="Ferro J.A."/>
            <person name="Reinach F.C."/>
            <person name="Farah C.S."/>
            <person name="Furlan L.R."/>
            <person name="Quaggio R.B."/>
            <person name="Monteiro-Vitorello C.B."/>
            <person name="Van Sluys M.A."/>
            <person name="Almeida N.F. Jr."/>
            <person name="Alves L.M.C."/>
            <person name="do Amaral A.M."/>
            <person name="Bertolini M.C."/>
            <person name="Camargo L.E.A."/>
            <person name="Camarotte G."/>
            <person name="Cannavan F."/>
            <person name="Cardozo J."/>
            <person name="Chambergo F."/>
            <person name="Ciapina L.P."/>
            <person name="Cicarelli R.M.B."/>
            <person name="Coutinho L.L."/>
            <person name="Cursino-Santos J.R."/>
            <person name="El-Dorry H."/>
            <person name="Faria J.B."/>
            <person name="Ferreira A.J.S."/>
            <person name="Ferreira R.C.C."/>
            <person name="Ferro M.I.T."/>
            <person name="Formighieri E.F."/>
            <person name="Franco M.C."/>
            <person name="Greggio C.C."/>
            <person name="Gruber A."/>
            <person name="Katsuyama A.M."/>
            <person name="Kishi L.T."/>
            <person name="Leite R.P."/>
            <person name="Lemos E.G.M."/>
            <person name="Lemos M.V.F."/>
            <person name="Locali E.C."/>
            <person name="Machado M.A."/>
            <person name="Madeira A.M.B.N."/>
            <person name="Martinez-Rossi N.M."/>
            <person name="Martins E.C."/>
            <person name="Meidanis J."/>
            <person name="Menck C.F.M."/>
            <person name="Miyaki C.Y."/>
            <person name="Moon D.H."/>
            <person name="Moreira L.M."/>
            <person name="Novo M.T.M."/>
            <person name="Okura V.K."/>
            <person name="Oliveira M.C."/>
            <person name="Oliveira V.R."/>
            <person name="Pereira H.A."/>
            <person name="Rossi A."/>
            <person name="Sena J.A.D."/>
            <person name="Silva C."/>
            <person name="de Souza R.F."/>
            <person name="Spinola L.A.F."/>
            <person name="Takita M.A."/>
            <person name="Tamura R.E."/>
            <person name="Teixeira E.C."/>
            <person name="Tezza R.I.D."/>
            <person name="Trindade dos Santos M."/>
            <person name="Truffi D."/>
            <person name="Tsai S.M."/>
            <person name="White F.F."/>
            <person name="Setubal J.C."/>
            <person name="Kitajima J.P."/>
        </authorList>
    </citation>
    <scope>NUCLEOTIDE SEQUENCE [LARGE SCALE GENOMIC DNA]</scope>
    <source>
        <strain>ATCC 33913 / DSM 3586 / NCPPB 528 / LMG 568 / P 25</strain>
    </source>
</reference>
<reference evidence="6" key="2">
    <citation type="journal article" date="2006" name="Biochemistry">
        <title>Evolution of enzymatic activities in the enolase superfamily: L-fuconate dehydratase from Xanthomonas campestris.</title>
        <authorList>
            <person name="Yew W.S."/>
            <person name="Fedorov A.A."/>
            <person name="Fedorov E.V."/>
            <person name="Rakus J.F."/>
            <person name="Pierce R.W."/>
            <person name="Almo S.C."/>
            <person name="Gerlt J.A."/>
        </authorList>
    </citation>
    <scope>FUNCTION</scope>
    <scope>BIOPHYSICOCHEMICAL PROPERTIES</scope>
    <source>
        <strain evidence="4">ATCC 33913 / DSM 3586 / NCPPB 528 / LMG 568 / P 25</strain>
    </source>
</reference>
<dbReference type="EC" id="1.1.1.-" evidence="4"/>
<dbReference type="EMBL" id="AE008922">
    <property type="protein sequence ID" value="AAM43288.1"/>
    <property type="molecule type" value="Genomic_DNA"/>
</dbReference>
<dbReference type="RefSeq" id="NP_639406.1">
    <property type="nucleotide sequence ID" value="NC_003902.1"/>
</dbReference>
<dbReference type="SMR" id="Q8P3K4"/>
<dbReference type="STRING" id="190485.XCC4067"/>
<dbReference type="EnsemblBacteria" id="AAM43288">
    <property type="protein sequence ID" value="AAM43288"/>
    <property type="gene ID" value="XCC4067"/>
</dbReference>
<dbReference type="KEGG" id="xcc:XCC4067"/>
<dbReference type="PATRIC" id="fig|190485.4.peg.4359"/>
<dbReference type="eggNOG" id="COG1028">
    <property type="taxonomic scope" value="Bacteria"/>
</dbReference>
<dbReference type="HOGENOM" id="CLU_010194_1_0_6"/>
<dbReference type="OrthoDB" id="9806974at2"/>
<dbReference type="BioCyc" id="MetaCyc:MONOMER-21811"/>
<dbReference type="Proteomes" id="UP000001010">
    <property type="component" value="Chromosome"/>
</dbReference>
<dbReference type="GO" id="GO:0016491">
    <property type="term" value="F:oxidoreductase activity"/>
    <property type="evidence" value="ECO:0000318"/>
    <property type="project" value="GO_Central"/>
</dbReference>
<dbReference type="FunFam" id="3.40.50.720:FF:000084">
    <property type="entry name" value="Short-chain dehydrogenase reductase"/>
    <property type="match status" value="1"/>
</dbReference>
<dbReference type="Gene3D" id="3.40.50.720">
    <property type="entry name" value="NAD(P)-binding Rossmann-like Domain"/>
    <property type="match status" value="1"/>
</dbReference>
<dbReference type="InterPro" id="IPR036291">
    <property type="entry name" value="NAD(P)-bd_dom_sf"/>
</dbReference>
<dbReference type="InterPro" id="IPR020904">
    <property type="entry name" value="Sc_DH/Rdtase_CS"/>
</dbReference>
<dbReference type="InterPro" id="IPR002347">
    <property type="entry name" value="SDR_fam"/>
</dbReference>
<dbReference type="InterPro" id="IPR051122">
    <property type="entry name" value="SDR_superfamily_enzyme"/>
</dbReference>
<dbReference type="PANTHER" id="PTHR43477:SF4">
    <property type="entry name" value="DEHYDROGENASE_REDUCTASE SDR FAMILY MEMBER 6"/>
    <property type="match status" value="1"/>
</dbReference>
<dbReference type="PANTHER" id="PTHR43477">
    <property type="entry name" value="DIHYDROANTICAPSIN 7-DEHYDROGENASE"/>
    <property type="match status" value="1"/>
</dbReference>
<dbReference type="Pfam" id="PF13561">
    <property type="entry name" value="adh_short_C2"/>
    <property type="match status" value="1"/>
</dbReference>
<dbReference type="PRINTS" id="PR00081">
    <property type="entry name" value="GDHRDH"/>
</dbReference>
<dbReference type="PRINTS" id="PR00080">
    <property type="entry name" value="SDRFAMILY"/>
</dbReference>
<dbReference type="SUPFAM" id="SSF51735">
    <property type="entry name" value="NAD(P)-binding Rossmann-fold domains"/>
    <property type="match status" value="1"/>
</dbReference>
<dbReference type="PROSITE" id="PS00061">
    <property type="entry name" value="ADH_SHORT"/>
    <property type="match status" value="1"/>
</dbReference>
<accession>Q8P3K4</accession>
<feature type="chain" id="PRO_0000419049" description="2-keto-3-deoxy-L-fuconate dehydrogenase">
    <location>
        <begin position="1"/>
        <end position="300"/>
    </location>
</feature>
<feature type="active site" description="Proton acceptor" evidence="3">
    <location>
        <position position="201"/>
    </location>
</feature>
<feature type="binding site" evidence="1">
    <location>
        <begin position="63"/>
        <end position="90"/>
    </location>
    <ligand>
        <name>NAD(+)</name>
        <dbReference type="ChEBI" id="CHEBI:57540"/>
    </ligand>
</feature>
<feature type="binding site" evidence="1">
    <location>
        <position position="112"/>
    </location>
    <ligand>
        <name>NAD(+)</name>
        <dbReference type="ChEBI" id="CHEBI:57540"/>
    </ligand>
</feature>
<feature type="binding site" evidence="1">
    <location>
        <position position="198"/>
    </location>
    <ligand>
        <name>substrate</name>
    </ligand>
</feature>
<feature type="binding site" evidence="1">
    <location>
        <position position="205"/>
    </location>
    <ligand>
        <name>NAD(+)</name>
        <dbReference type="ChEBI" id="CHEBI:57540"/>
    </ligand>
</feature>
<feature type="binding site" evidence="1">
    <location>
        <begin position="234"/>
        <end position="238"/>
    </location>
    <ligand>
        <name>NAD(+)</name>
        <dbReference type="ChEBI" id="CHEBI:57540"/>
    </ligand>
</feature>
<feature type="binding site" evidence="1">
    <location>
        <position position="242"/>
    </location>
    <ligand>
        <name>substrate</name>
    </ligand>
</feature>
<feature type="binding site" evidence="1">
    <location>
        <position position="260"/>
    </location>
    <ligand>
        <name>substrate</name>
    </ligand>
</feature>
<evidence type="ECO:0000250" key="1">
    <source>
        <dbReference type="UniProtKB" id="Q3T046"/>
    </source>
</evidence>
<evidence type="ECO:0000255" key="2"/>
<evidence type="ECO:0000255" key="3">
    <source>
        <dbReference type="PROSITE-ProRule" id="PRU10001"/>
    </source>
</evidence>
<evidence type="ECO:0000269" key="4">
    <source>
    </source>
</evidence>
<evidence type="ECO:0000303" key="5">
    <source>
    </source>
</evidence>
<evidence type="ECO:0000305" key="6"/>
<proteinExistence type="evidence at protein level"/>
<keyword id="KW-0520">NAD</keyword>
<keyword id="KW-0560">Oxidoreductase</keyword>
<keyword id="KW-0597">Phosphoprotein</keyword>
<keyword id="KW-1185">Reference proteome</keyword>
<gene>
    <name type="ordered locus">XCC4067</name>
</gene>
<comment type="function">
    <text evidence="4">Plays a role in the catabolism of L-fucose. Catalyzes the NAD(+)-dependent oxidation of 2-keo-3-deoxy-L-fuconate to 2,4-diketo-3-deoxy-L-fuconate.</text>
</comment>
<comment type="biophysicochemical properties">
    <kinetics>
        <KM evidence="4">0.39 M for 2-keto-3-deoxy-L-fuconate</KM>
        <KM evidence="4">6.2 M for 2-keto-3-deoxy-L-galactonate</KM>
        <KM evidence="4">2.1 M for 2-keto-3-deoxy-D-arabinonate</KM>
    </kinetics>
</comment>
<comment type="similarity">
    <text evidence="2">Belongs to the short-chain dehydrogenases/reductases (SDR) family.</text>
</comment>
<protein>
    <recommendedName>
        <fullName evidence="5">2-keto-3-deoxy-L-fuconate dehydrogenase</fullName>
        <ecNumber evidence="4">1.1.1.-</ecNumber>
    </recommendedName>
</protein>